<keyword id="KW-0479">Metal-binding</keyword>
<keyword id="KW-0507">mRNA processing</keyword>
<keyword id="KW-0508">mRNA splicing</keyword>
<keyword id="KW-0539">Nucleus</keyword>
<keyword id="KW-1185">Reference proteome</keyword>
<keyword id="KW-0694">RNA-binding</keyword>
<keyword id="KW-0747">Spliceosome</keyword>
<keyword id="KW-0862">Zinc</keyword>
<keyword id="KW-0863">Zinc-finger</keyword>
<gene>
    <name type="primary">BBP</name>
    <name type="ordered locus">YALI0F18370g</name>
</gene>
<sequence length="605" mass="67189">MSSTYSSIQRHRKDTSSSGSNTTPLARRRRFDEGPADPGSAPHLDSFVVPPTRHDDGTKRQPGRRKQRWSHGENKVADLLQMPTALTGHLTPEQAEAYAIYYRIEEISQQLRLGDIVPPEDERSPSPPPQYDSMGKRTNTRDARYTRQLEEERHRLIERAQRLIPNYRPPVDYHKPAKTQEVVYIPVNEYPDINFIGQLLGARGKTLKKMEQESGAKICIRGRGSVKQGKGRTDIPFQSTAEDDLHCLIISEDEEKIARAVQLVQQVIDTAASVPEGQNELKRSQLRELAALNGTLRDDENYGGAPQSSSGDEMDDRNKRRNNFMSSIVCHICGSKGHFARDCLEKGTNAGTSENADREYDALMRELQGEGVIDTASQQQSIAQNPNTNNVSKLPPAVTGSNAAPINMRKPMSERGGSFDRFDRGGFNQSNQREPQQQSHQQNMHNTNGNNYDRYDRNFNNSSNSSPELPPWHRPTPPSQPAAPPWLRRDNYKKHDKVSVQQSMQQSPWNRDTRQHQHQHQPPVHHQSMFNNNQSPIGPPGMSSSGFGGYGGAPAGVPGMSVPPGPPGLSKVPPPPPPPGVPGMDGDQPIRHPPPPPPGVIGPPK</sequence>
<evidence type="ECO:0000250" key="1"/>
<evidence type="ECO:0000255" key="2">
    <source>
        <dbReference type="PROSITE-ProRule" id="PRU00047"/>
    </source>
</evidence>
<evidence type="ECO:0000255" key="3">
    <source>
        <dbReference type="PROSITE-ProRule" id="PRU00117"/>
    </source>
</evidence>
<evidence type="ECO:0000256" key="4">
    <source>
        <dbReference type="SAM" id="MobiDB-lite"/>
    </source>
</evidence>
<evidence type="ECO:0000305" key="5"/>
<feature type="chain" id="PRO_0000256152" description="Branchpoint-bridging protein">
    <location>
        <begin position="1"/>
        <end position="605"/>
    </location>
</feature>
<feature type="domain" description="KH" evidence="3">
    <location>
        <begin position="184"/>
        <end position="264"/>
    </location>
</feature>
<feature type="zinc finger region" description="CCHC-type" evidence="2">
    <location>
        <begin position="328"/>
        <end position="345"/>
    </location>
</feature>
<feature type="region of interest" description="Disordered" evidence="4">
    <location>
        <begin position="1"/>
        <end position="75"/>
    </location>
</feature>
<feature type="region of interest" description="Disordered" evidence="4">
    <location>
        <begin position="117"/>
        <end position="139"/>
    </location>
</feature>
<feature type="region of interest" description="Disordered" evidence="4">
    <location>
        <begin position="294"/>
        <end position="319"/>
    </location>
</feature>
<feature type="region of interest" description="Disordered" evidence="4">
    <location>
        <begin position="376"/>
        <end position="605"/>
    </location>
</feature>
<feature type="compositionally biased region" description="Polar residues" evidence="4">
    <location>
        <begin position="376"/>
        <end position="392"/>
    </location>
</feature>
<feature type="compositionally biased region" description="Basic and acidic residues" evidence="4">
    <location>
        <begin position="411"/>
        <end position="424"/>
    </location>
</feature>
<feature type="compositionally biased region" description="Polar residues" evidence="4">
    <location>
        <begin position="428"/>
        <end position="445"/>
    </location>
</feature>
<feature type="compositionally biased region" description="Low complexity" evidence="4">
    <location>
        <begin position="446"/>
        <end position="466"/>
    </location>
</feature>
<feature type="compositionally biased region" description="Pro residues" evidence="4">
    <location>
        <begin position="468"/>
        <end position="484"/>
    </location>
</feature>
<feature type="compositionally biased region" description="Polar residues" evidence="4">
    <location>
        <begin position="499"/>
        <end position="510"/>
    </location>
</feature>
<feature type="compositionally biased region" description="Pro residues" evidence="4">
    <location>
        <begin position="561"/>
        <end position="581"/>
    </location>
</feature>
<feature type="compositionally biased region" description="Pro residues" evidence="4">
    <location>
        <begin position="591"/>
        <end position="605"/>
    </location>
</feature>
<protein>
    <recommendedName>
        <fullName>Branchpoint-bridging protein</fullName>
    </recommendedName>
</protein>
<comment type="function">
    <text evidence="1">Necessary for the splicing of pre-mRNA. Has a role in the recognition of the branch site (5'-UACUAAC-3'), the pyrimidine tract and the 3'-splice site at the 3'-end of introns (By similarity).</text>
</comment>
<comment type="subcellular location">
    <subcellularLocation>
        <location evidence="1">Nucleus</location>
    </subcellularLocation>
</comment>
<comment type="similarity">
    <text evidence="5">Belongs to the BBP/SF1 family.</text>
</comment>
<organism>
    <name type="scientific">Yarrowia lipolytica (strain CLIB 122 / E 150)</name>
    <name type="common">Yeast</name>
    <name type="synonym">Candida lipolytica</name>
    <dbReference type="NCBI Taxonomy" id="284591"/>
    <lineage>
        <taxon>Eukaryota</taxon>
        <taxon>Fungi</taxon>
        <taxon>Dikarya</taxon>
        <taxon>Ascomycota</taxon>
        <taxon>Saccharomycotina</taxon>
        <taxon>Dipodascomycetes</taxon>
        <taxon>Dipodascales</taxon>
        <taxon>Dipodascales incertae sedis</taxon>
        <taxon>Yarrowia</taxon>
    </lineage>
</organism>
<name>BBP_YARLI</name>
<accession>Q6C187</accession>
<reference key="1">
    <citation type="journal article" date="2004" name="Nature">
        <title>Genome evolution in yeasts.</title>
        <authorList>
            <person name="Dujon B."/>
            <person name="Sherman D."/>
            <person name="Fischer G."/>
            <person name="Durrens P."/>
            <person name="Casaregola S."/>
            <person name="Lafontaine I."/>
            <person name="de Montigny J."/>
            <person name="Marck C."/>
            <person name="Neuveglise C."/>
            <person name="Talla E."/>
            <person name="Goffard N."/>
            <person name="Frangeul L."/>
            <person name="Aigle M."/>
            <person name="Anthouard V."/>
            <person name="Babour A."/>
            <person name="Barbe V."/>
            <person name="Barnay S."/>
            <person name="Blanchin S."/>
            <person name="Beckerich J.-M."/>
            <person name="Beyne E."/>
            <person name="Bleykasten C."/>
            <person name="Boisrame A."/>
            <person name="Boyer J."/>
            <person name="Cattolico L."/>
            <person name="Confanioleri F."/>
            <person name="de Daruvar A."/>
            <person name="Despons L."/>
            <person name="Fabre E."/>
            <person name="Fairhead C."/>
            <person name="Ferry-Dumazet H."/>
            <person name="Groppi A."/>
            <person name="Hantraye F."/>
            <person name="Hennequin C."/>
            <person name="Jauniaux N."/>
            <person name="Joyet P."/>
            <person name="Kachouri R."/>
            <person name="Kerrest A."/>
            <person name="Koszul R."/>
            <person name="Lemaire M."/>
            <person name="Lesur I."/>
            <person name="Ma L."/>
            <person name="Muller H."/>
            <person name="Nicaud J.-M."/>
            <person name="Nikolski M."/>
            <person name="Oztas S."/>
            <person name="Ozier-Kalogeropoulos O."/>
            <person name="Pellenz S."/>
            <person name="Potier S."/>
            <person name="Richard G.-F."/>
            <person name="Straub M.-L."/>
            <person name="Suleau A."/>
            <person name="Swennen D."/>
            <person name="Tekaia F."/>
            <person name="Wesolowski-Louvel M."/>
            <person name="Westhof E."/>
            <person name="Wirth B."/>
            <person name="Zeniou-Meyer M."/>
            <person name="Zivanovic Y."/>
            <person name="Bolotin-Fukuhara M."/>
            <person name="Thierry A."/>
            <person name="Bouchier C."/>
            <person name="Caudron B."/>
            <person name="Scarpelli C."/>
            <person name="Gaillardin C."/>
            <person name="Weissenbach J."/>
            <person name="Wincker P."/>
            <person name="Souciet J.-L."/>
        </authorList>
    </citation>
    <scope>NUCLEOTIDE SEQUENCE [LARGE SCALE GENOMIC DNA]</scope>
    <source>
        <strain>CLIB 122 / E 150</strain>
    </source>
</reference>
<dbReference type="EMBL" id="CR382132">
    <property type="protein sequence ID" value="CAG78384.1"/>
    <property type="molecule type" value="Genomic_DNA"/>
</dbReference>
<dbReference type="RefSeq" id="XP_505575.1">
    <property type="nucleotide sequence ID" value="XM_505575.1"/>
</dbReference>
<dbReference type="SMR" id="Q6C187"/>
<dbReference type="STRING" id="284591.Q6C187"/>
<dbReference type="EnsemblFungi" id="CAG78384">
    <property type="protein sequence ID" value="CAG78384"/>
    <property type="gene ID" value="YALI0_F18370g"/>
</dbReference>
<dbReference type="KEGG" id="yli:2907809"/>
<dbReference type="VEuPathDB" id="FungiDB:YALI0_F18370g"/>
<dbReference type="HOGENOM" id="CLU_016864_1_1_1"/>
<dbReference type="InParanoid" id="Q6C187"/>
<dbReference type="OMA" id="KGMYASE"/>
<dbReference type="OrthoDB" id="119720at4891"/>
<dbReference type="Proteomes" id="UP000001300">
    <property type="component" value="Chromosome F"/>
</dbReference>
<dbReference type="GO" id="GO:0005634">
    <property type="term" value="C:nucleus"/>
    <property type="evidence" value="ECO:0000318"/>
    <property type="project" value="GO_Central"/>
</dbReference>
<dbReference type="GO" id="GO:0005681">
    <property type="term" value="C:spliceosomal complex"/>
    <property type="evidence" value="ECO:0007669"/>
    <property type="project" value="UniProtKB-KW"/>
</dbReference>
<dbReference type="GO" id="GO:0003729">
    <property type="term" value="F:mRNA binding"/>
    <property type="evidence" value="ECO:0000318"/>
    <property type="project" value="GO_Central"/>
</dbReference>
<dbReference type="GO" id="GO:0008270">
    <property type="term" value="F:zinc ion binding"/>
    <property type="evidence" value="ECO:0007669"/>
    <property type="project" value="UniProtKB-KW"/>
</dbReference>
<dbReference type="GO" id="GO:0006397">
    <property type="term" value="P:mRNA processing"/>
    <property type="evidence" value="ECO:0007669"/>
    <property type="project" value="UniProtKB-KW"/>
</dbReference>
<dbReference type="GO" id="GO:0048024">
    <property type="term" value="P:regulation of mRNA splicing, via spliceosome"/>
    <property type="evidence" value="ECO:0000318"/>
    <property type="project" value="GO_Central"/>
</dbReference>
<dbReference type="GO" id="GO:0008380">
    <property type="term" value="P:RNA splicing"/>
    <property type="evidence" value="ECO:0007669"/>
    <property type="project" value="UniProtKB-KW"/>
</dbReference>
<dbReference type="CDD" id="cd02395">
    <property type="entry name" value="KH-I_BBP"/>
    <property type="match status" value="1"/>
</dbReference>
<dbReference type="FunFam" id="3.30.1370.10:FF:000024">
    <property type="entry name" value="Branchpoint-bridging protein-like protein"/>
    <property type="match status" value="1"/>
</dbReference>
<dbReference type="Gene3D" id="6.10.140.1790">
    <property type="match status" value="1"/>
</dbReference>
<dbReference type="Gene3D" id="3.30.1370.10">
    <property type="entry name" value="K Homology domain, type 1"/>
    <property type="match status" value="1"/>
</dbReference>
<dbReference type="Gene3D" id="4.10.60.10">
    <property type="entry name" value="Zinc finger, CCHC-type"/>
    <property type="match status" value="1"/>
</dbReference>
<dbReference type="InterPro" id="IPR045071">
    <property type="entry name" value="BBP-like"/>
</dbReference>
<dbReference type="InterPro" id="IPR055256">
    <property type="entry name" value="KH_1_KHDC4/BBP-like"/>
</dbReference>
<dbReference type="InterPro" id="IPR004087">
    <property type="entry name" value="KH_dom"/>
</dbReference>
<dbReference type="InterPro" id="IPR036612">
    <property type="entry name" value="KH_dom_type_1_sf"/>
</dbReference>
<dbReference type="InterPro" id="IPR032570">
    <property type="entry name" value="SF1-HH"/>
</dbReference>
<dbReference type="InterPro" id="IPR047086">
    <property type="entry name" value="SF1-HH_sf"/>
</dbReference>
<dbReference type="InterPro" id="IPR001878">
    <property type="entry name" value="Znf_CCHC"/>
</dbReference>
<dbReference type="InterPro" id="IPR036875">
    <property type="entry name" value="Znf_CCHC_sf"/>
</dbReference>
<dbReference type="PANTHER" id="PTHR11208">
    <property type="entry name" value="RNA-BINDING PROTEIN RELATED"/>
    <property type="match status" value="1"/>
</dbReference>
<dbReference type="PANTHER" id="PTHR11208:SF45">
    <property type="entry name" value="SPLICING FACTOR 1"/>
    <property type="match status" value="1"/>
</dbReference>
<dbReference type="Pfam" id="PF22675">
    <property type="entry name" value="KH-I_KHDC4-BBP"/>
    <property type="match status" value="1"/>
</dbReference>
<dbReference type="Pfam" id="PF16275">
    <property type="entry name" value="SF1-HH"/>
    <property type="match status" value="1"/>
</dbReference>
<dbReference type="Pfam" id="PF00098">
    <property type="entry name" value="zf-CCHC"/>
    <property type="match status" value="1"/>
</dbReference>
<dbReference type="SMART" id="SM00322">
    <property type="entry name" value="KH"/>
    <property type="match status" value="1"/>
</dbReference>
<dbReference type="SMART" id="SM00343">
    <property type="entry name" value="ZnF_C2HC"/>
    <property type="match status" value="1"/>
</dbReference>
<dbReference type="SUPFAM" id="SSF54791">
    <property type="entry name" value="Eukaryotic type KH-domain (KH-domain type I)"/>
    <property type="match status" value="1"/>
</dbReference>
<dbReference type="SUPFAM" id="SSF57756">
    <property type="entry name" value="Retrovirus zinc finger-like domains"/>
    <property type="match status" value="1"/>
</dbReference>
<dbReference type="PROSITE" id="PS50084">
    <property type="entry name" value="KH_TYPE_1"/>
    <property type="match status" value="1"/>
</dbReference>
<dbReference type="PROSITE" id="PS50158">
    <property type="entry name" value="ZF_CCHC"/>
    <property type="match status" value="1"/>
</dbReference>
<proteinExistence type="inferred from homology"/>